<accession>P79812</accession>
<name>OPSD_NEOSA</name>
<organism>
    <name type="scientific">Neoniphon sammara</name>
    <name type="common">Spotfin squirrelfish</name>
    <name type="synonym">Holocentrus sammara</name>
    <dbReference type="NCBI Taxonomy" id="47706"/>
    <lineage>
        <taxon>Eukaryota</taxon>
        <taxon>Metazoa</taxon>
        <taxon>Chordata</taxon>
        <taxon>Craniata</taxon>
        <taxon>Vertebrata</taxon>
        <taxon>Euteleostomi</taxon>
        <taxon>Actinopterygii</taxon>
        <taxon>Neopterygii</taxon>
        <taxon>Teleostei</taxon>
        <taxon>Neoteleostei</taxon>
        <taxon>Acanthomorphata</taxon>
        <taxon>Holocentriformes</taxon>
        <taxon>Holocentridae</taxon>
        <taxon>Neoniphon</taxon>
    </lineage>
</organism>
<feature type="chain" id="PRO_0000197694" description="Rhodopsin">
    <location>
        <begin position="1"/>
        <end position="351"/>
    </location>
</feature>
<feature type="topological domain" description="Extracellular" evidence="8">
    <location>
        <begin position="1"/>
        <end position="36"/>
    </location>
</feature>
<feature type="transmembrane region" description="Helical; Name=1" evidence="1">
    <location>
        <begin position="37"/>
        <end position="61"/>
    </location>
</feature>
<feature type="topological domain" description="Cytoplasmic" evidence="8">
    <location>
        <begin position="62"/>
        <end position="73"/>
    </location>
</feature>
<feature type="transmembrane region" description="Helical; Name=2" evidence="1">
    <location>
        <begin position="74"/>
        <end position="96"/>
    </location>
</feature>
<feature type="topological domain" description="Extracellular" evidence="8">
    <location>
        <begin position="97"/>
        <end position="110"/>
    </location>
</feature>
<feature type="transmembrane region" description="Helical; Name=3" evidence="1">
    <location>
        <begin position="111"/>
        <end position="133"/>
    </location>
</feature>
<feature type="topological domain" description="Cytoplasmic" evidence="8">
    <location>
        <begin position="134"/>
        <end position="152"/>
    </location>
</feature>
<feature type="transmembrane region" description="Helical; Name=4" evidence="1">
    <location>
        <begin position="153"/>
        <end position="173"/>
    </location>
</feature>
<feature type="topological domain" description="Extracellular" evidence="8">
    <location>
        <begin position="174"/>
        <end position="202"/>
    </location>
</feature>
<feature type="transmembrane region" description="Helical; Name=5" evidence="1">
    <location>
        <begin position="203"/>
        <end position="224"/>
    </location>
</feature>
<feature type="topological domain" description="Cytoplasmic" evidence="8">
    <location>
        <begin position="225"/>
        <end position="252"/>
    </location>
</feature>
<feature type="transmembrane region" description="Helical; Name=6" evidence="1">
    <location>
        <begin position="253"/>
        <end position="274"/>
    </location>
</feature>
<feature type="topological domain" description="Extracellular" evidence="8">
    <location>
        <begin position="275"/>
        <end position="286"/>
    </location>
</feature>
<feature type="transmembrane region" description="Helical; Name=7" evidence="1">
    <location>
        <begin position="287"/>
        <end position="308"/>
    </location>
</feature>
<feature type="topological domain" description="Cytoplasmic" evidence="8">
    <location>
        <begin position="309"/>
        <end position="351"/>
    </location>
</feature>
<feature type="region of interest" description="Disordered" evidence="7">
    <location>
        <begin position="330"/>
        <end position="351"/>
    </location>
</feature>
<feature type="short sequence motif" description="'Ionic lock' involved in activated form stabilization" evidence="1">
    <location>
        <begin position="134"/>
        <end position="136"/>
    </location>
</feature>
<feature type="compositionally biased region" description="Low complexity" evidence="7">
    <location>
        <begin position="335"/>
        <end position="351"/>
    </location>
</feature>
<feature type="site" description="Plays an important role in the conformation switch to the active conformation" evidence="1">
    <location>
        <position position="113"/>
    </location>
</feature>
<feature type="modified residue" description="N6-(retinylidene)lysine" evidence="1">
    <location>
        <position position="296"/>
    </location>
</feature>
<feature type="lipid moiety-binding region" description="S-palmitoyl cysteine" evidence="1">
    <location>
        <position position="323"/>
    </location>
</feature>
<feature type="glycosylation site" description="N-linked (GlcNAc...) asparagine" evidence="5">
    <location>
        <position position="2"/>
    </location>
</feature>
<feature type="glycosylation site" description="N-linked (GlcNAc...) asparagine" evidence="5">
    <location>
        <position position="15"/>
    </location>
</feature>
<feature type="glycosylation site" description="N-linked (GlcNAc...) asparagine" evidence="5">
    <location>
        <position position="200"/>
    </location>
</feature>
<feature type="disulfide bond" evidence="6">
    <location>
        <begin position="110"/>
        <end position="187"/>
    </location>
</feature>
<protein>
    <recommendedName>
        <fullName>Rhodopsin</fullName>
    </recommendedName>
</protein>
<gene>
    <name type="primary">rho</name>
</gene>
<proteinExistence type="evidence at transcript level"/>
<evidence type="ECO:0000250" key="1">
    <source>
        <dbReference type="UniProtKB" id="P02699"/>
    </source>
</evidence>
<evidence type="ECO:0000250" key="2">
    <source>
        <dbReference type="UniProtKB" id="P08100"/>
    </source>
</evidence>
<evidence type="ECO:0000250" key="3">
    <source>
        <dbReference type="UniProtKB" id="P32309"/>
    </source>
</evidence>
<evidence type="ECO:0000250" key="4">
    <source>
        <dbReference type="UniProtKB" id="P35359"/>
    </source>
</evidence>
<evidence type="ECO:0000255" key="5"/>
<evidence type="ECO:0000255" key="6">
    <source>
        <dbReference type="PROSITE-ProRule" id="PRU00521"/>
    </source>
</evidence>
<evidence type="ECO:0000256" key="7">
    <source>
        <dbReference type="SAM" id="MobiDB-lite"/>
    </source>
</evidence>
<evidence type="ECO:0000305" key="8"/>
<reference key="1">
    <citation type="submission" date="1997-01" db="EMBL/GenBank/DDBJ databases">
        <title>Molecular phylogeny of 11 holocentrid fishes (Order Beryciformes) inferred from rhodopsin cDNA and cytochrome b.</title>
        <authorList>
            <person name="Toller W.W."/>
            <person name="Moses K."/>
            <person name="McFall-Ngai M.J."/>
        </authorList>
    </citation>
    <scope>NUCLEOTIDE SEQUENCE [MRNA]</scope>
    <source>
        <tissue>Eye</tissue>
    </source>
</reference>
<comment type="function">
    <text evidence="1 2 3">Photoreceptor required for image-forming vision at low light intensity. While most salt water fish species use retinal as chromophore, most freshwater fish use 3-dehydroretinal, or a mixture of retinal and 3-dehydroretinal (By similarity). Light-induced isomerization of 11-cis to all-trans retinal triggers a conformational change that activates signaling via G-proteins. Subsequent receptor phosphorylation mediates displacement of the bound G-protein alpha subunit by arrestin and terminates signaling (By similarity).</text>
</comment>
<comment type="subcellular location">
    <subcellularLocation>
        <location evidence="2">Membrane</location>
        <topology evidence="2">Multi-pass membrane protein</topology>
    </subcellularLocation>
    <subcellularLocation>
        <location evidence="4">Cell projection</location>
        <location evidence="4">Cilium</location>
        <location evidence="4">Photoreceptor outer segment</location>
    </subcellularLocation>
    <text evidence="2">Synthesized in the inner segment (IS) of rod photoreceptor cells before vectorial transport to disk membranes in the rod outer segment (OS) photosensory cilia.</text>
</comment>
<comment type="PTM">
    <text evidence="1">Phosphorylated on some or all of the serine and threonine residues present in the C-terminal region.</text>
</comment>
<comment type="PTM">
    <text evidence="1">Contains one covalently linked retinal chromophore.</text>
</comment>
<comment type="similarity">
    <text evidence="6">Belongs to the G-protein coupled receptor 1 family. Opsin subfamily.</text>
</comment>
<keyword id="KW-0966">Cell projection</keyword>
<keyword id="KW-0157">Chromophore</keyword>
<keyword id="KW-1015">Disulfide bond</keyword>
<keyword id="KW-0297">G-protein coupled receptor</keyword>
<keyword id="KW-0325">Glycoprotein</keyword>
<keyword id="KW-0449">Lipoprotein</keyword>
<keyword id="KW-0472">Membrane</keyword>
<keyword id="KW-0564">Palmitate</keyword>
<keyword id="KW-0597">Phosphoprotein</keyword>
<keyword id="KW-0600">Photoreceptor protein</keyword>
<keyword id="KW-0675">Receptor</keyword>
<keyword id="KW-0681">Retinal protein</keyword>
<keyword id="KW-0716">Sensory transduction</keyword>
<keyword id="KW-0807">Transducer</keyword>
<keyword id="KW-0812">Transmembrane</keyword>
<keyword id="KW-1133">Transmembrane helix</keyword>
<keyword id="KW-0844">Vision</keyword>
<sequence length="351" mass="39369">MNGTEGPYFYVPMVNTTGVVRSPYEYPQYYLVNPAAFAVLGAYMFFLIIFGFPINFLTLYVTLEHKKLRTPLNYILLNLAVADLFMVIGGFTTTMYSSMHGYFVLGRLGCNLEGFSATLGGMISLWSLAVLAIERWVVVCKPTSNFRFGENHAIMGVSLTWTMALACTVPPLVGWSRYIPEGMQCSCGIDYYTRAEGFNNESFVLYMFFCHFMVPLIIIFFCYGRLLCAVKEAAAAQQESETTQRAEREVTRMVILMVIGYLVCWLPYASVAWFIFTHQGSEFGPLFMTIPAFFAKSSSIYNPVIYICMNKQFRNCMITTLFCGKNPFEGEEEGASSTKTEASSASSVSPA</sequence>
<dbReference type="EMBL" id="U57536">
    <property type="protein sequence ID" value="AAB39524.1"/>
    <property type="molecule type" value="mRNA"/>
</dbReference>
<dbReference type="SMR" id="P79812"/>
<dbReference type="GlyCosmos" id="P79812">
    <property type="glycosylation" value="3 sites, No reported glycans"/>
</dbReference>
<dbReference type="GO" id="GO:0016020">
    <property type="term" value="C:membrane"/>
    <property type="evidence" value="ECO:0000250"/>
    <property type="project" value="UniProtKB"/>
</dbReference>
<dbReference type="GO" id="GO:0097381">
    <property type="term" value="C:photoreceptor disc membrane"/>
    <property type="evidence" value="ECO:0000250"/>
    <property type="project" value="UniProtKB"/>
</dbReference>
<dbReference type="GO" id="GO:0005886">
    <property type="term" value="C:plasma membrane"/>
    <property type="evidence" value="ECO:0000250"/>
    <property type="project" value="UniProtKB"/>
</dbReference>
<dbReference type="GO" id="GO:0005502">
    <property type="term" value="F:11-cis retinal binding"/>
    <property type="evidence" value="ECO:0000250"/>
    <property type="project" value="UniProtKB"/>
</dbReference>
<dbReference type="GO" id="GO:0008020">
    <property type="term" value="F:G protein-coupled photoreceptor activity"/>
    <property type="evidence" value="ECO:0000250"/>
    <property type="project" value="UniProtKB"/>
</dbReference>
<dbReference type="GO" id="GO:0016038">
    <property type="term" value="P:absorption of visible light"/>
    <property type="evidence" value="ECO:0000250"/>
    <property type="project" value="UniProtKB"/>
</dbReference>
<dbReference type="GO" id="GO:0016056">
    <property type="term" value="P:G protein-coupled opsin signaling pathway"/>
    <property type="evidence" value="ECO:0000250"/>
    <property type="project" value="UniProtKB"/>
</dbReference>
<dbReference type="GO" id="GO:0007601">
    <property type="term" value="P:visual perception"/>
    <property type="evidence" value="ECO:0007669"/>
    <property type="project" value="UniProtKB-KW"/>
</dbReference>
<dbReference type="CDD" id="cd15080">
    <property type="entry name" value="7tmA_MWS_opsin"/>
    <property type="match status" value="1"/>
</dbReference>
<dbReference type="FunFam" id="1.20.1070.10:FF:000018">
    <property type="entry name" value="Rhodopsin"/>
    <property type="match status" value="1"/>
</dbReference>
<dbReference type="Gene3D" id="1.20.1070.10">
    <property type="entry name" value="Rhodopsin 7-helix transmembrane proteins"/>
    <property type="match status" value="1"/>
</dbReference>
<dbReference type="InterPro" id="IPR050125">
    <property type="entry name" value="GPCR_opsins"/>
</dbReference>
<dbReference type="InterPro" id="IPR000276">
    <property type="entry name" value="GPCR_Rhodpsn"/>
</dbReference>
<dbReference type="InterPro" id="IPR017452">
    <property type="entry name" value="GPCR_Rhodpsn_7TM"/>
</dbReference>
<dbReference type="InterPro" id="IPR001760">
    <property type="entry name" value="Opsin"/>
</dbReference>
<dbReference type="InterPro" id="IPR027430">
    <property type="entry name" value="Retinal_BS"/>
</dbReference>
<dbReference type="InterPro" id="IPR000732">
    <property type="entry name" value="Rhodopsin"/>
</dbReference>
<dbReference type="InterPro" id="IPR019477">
    <property type="entry name" value="Rhodopsin_N"/>
</dbReference>
<dbReference type="PANTHER" id="PTHR24240">
    <property type="entry name" value="OPSIN"/>
    <property type="match status" value="1"/>
</dbReference>
<dbReference type="Pfam" id="PF00001">
    <property type="entry name" value="7tm_1"/>
    <property type="match status" value="1"/>
</dbReference>
<dbReference type="Pfam" id="PF10413">
    <property type="entry name" value="Rhodopsin_N"/>
    <property type="match status" value="1"/>
</dbReference>
<dbReference type="PRINTS" id="PR00237">
    <property type="entry name" value="GPCRRHODOPSN"/>
</dbReference>
<dbReference type="PRINTS" id="PR00238">
    <property type="entry name" value="OPSIN"/>
</dbReference>
<dbReference type="PRINTS" id="PR00579">
    <property type="entry name" value="RHODOPSIN"/>
</dbReference>
<dbReference type="SUPFAM" id="SSF81321">
    <property type="entry name" value="Family A G protein-coupled receptor-like"/>
    <property type="match status" value="1"/>
</dbReference>
<dbReference type="PROSITE" id="PS00237">
    <property type="entry name" value="G_PROTEIN_RECEP_F1_1"/>
    <property type="match status" value="1"/>
</dbReference>
<dbReference type="PROSITE" id="PS50262">
    <property type="entry name" value="G_PROTEIN_RECEP_F1_2"/>
    <property type="match status" value="1"/>
</dbReference>
<dbReference type="PROSITE" id="PS00238">
    <property type="entry name" value="OPSIN"/>
    <property type="match status" value="1"/>
</dbReference>